<reference key="1">
    <citation type="submission" date="2006-12" db="EMBL/GenBank/DDBJ databases">
        <authorList>
            <person name="Fouts D.E."/>
            <person name="Nelson K.E."/>
            <person name="Sebastian Y."/>
        </authorList>
    </citation>
    <scope>NUCLEOTIDE SEQUENCE [LARGE SCALE GENOMIC DNA]</scope>
    <source>
        <strain>81-176</strain>
    </source>
</reference>
<protein>
    <recommendedName>
        <fullName evidence="1">Ribosomal RNA small subunit methyltransferase G</fullName>
        <ecNumber evidence="1">2.1.1.170</ecNumber>
    </recommendedName>
    <alternativeName>
        <fullName evidence="1">16S rRNA 7-methylguanosine methyltransferase</fullName>
        <shortName evidence="1">16S rRNA m7G methyltransferase</shortName>
    </alternativeName>
</protein>
<dbReference type="EC" id="2.1.1.170" evidence="1"/>
<dbReference type="EMBL" id="CP000538">
    <property type="protein sequence ID" value="EAQ72080.1"/>
    <property type="molecule type" value="Genomic_DNA"/>
</dbReference>
<dbReference type="RefSeq" id="WP_002855974.1">
    <property type="nucleotide sequence ID" value="NC_008787.1"/>
</dbReference>
<dbReference type="SMR" id="A1VZY5"/>
<dbReference type="KEGG" id="cjj:CJJ81176_1015"/>
<dbReference type="eggNOG" id="COG0357">
    <property type="taxonomic scope" value="Bacteria"/>
</dbReference>
<dbReference type="HOGENOM" id="CLU_065341_2_1_7"/>
<dbReference type="Proteomes" id="UP000000646">
    <property type="component" value="Chromosome"/>
</dbReference>
<dbReference type="GO" id="GO:0005829">
    <property type="term" value="C:cytosol"/>
    <property type="evidence" value="ECO:0007669"/>
    <property type="project" value="TreeGrafter"/>
</dbReference>
<dbReference type="GO" id="GO:0070043">
    <property type="term" value="F:rRNA (guanine-N7-)-methyltransferase activity"/>
    <property type="evidence" value="ECO:0007669"/>
    <property type="project" value="UniProtKB-UniRule"/>
</dbReference>
<dbReference type="CDD" id="cd02440">
    <property type="entry name" value="AdoMet_MTases"/>
    <property type="match status" value="1"/>
</dbReference>
<dbReference type="Gene3D" id="3.40.50.150">
    <property type="entry name" value="Vaccinia Virus protein VP39"/>
    <property type="match status" value="1"/>
</dbReference>
<dbReference type="HAMAP" id="MF_00074">
    <property type="entry name" value="16SrRNA_methyltr_G"/>
    <property type="match status" value="1"/>
</dbReference>
<dbReference type="InterPro" id="IPR003682">
    <property type="entry name" value="rRNA_ssu_MeTfrase_G"/>
</dbReference>
<dbReference type="InterPro" id="IPR029063">
    <property type="entry name" value="SAM-dependent_MTases_sf"/>
</dbReference>
<dbReference type="NCBIfam" id="TIGR00138">
    <property type="entry name" value="rsmG_gidB"/>
    <property type="match status" value="1"/>
</dbReference>
<dbReference type="PANTHER" id="PTHR31760">
    <property type="entry name" value="S-ADENOSYL-L-METHIONINE-DEPENDENT METHYLTRANSFERASES SUPERFAMILY PROTEIN"/>
    <property type="match status" value="1"/>
</dbReference>
<dbReference type="PANTHER" id="PTHR31760:SF0">
    <property type="entry name" value="S-ADENOSYL-L-METHIONINE-DEPENDENT METHYLTRANSFERASES SUPERFAMILY PROTEIN"/>
    <property type="match status" value="1"/>
</dbReference>
<dbReference type="Pfam" id="PF02527">
    <property type="entry name" value="GidB"/>
    <property type="match status" value="1"/>
</dbReference>
<dbReference type="PIRSF" id="PIRSF003078">
    <property type="entry name" value="GidB"/>
    <property type="match status" value="1"/>
</dbReference>
<dbReference type="SUPFAM" id="SSF53335">
    <property type="entry name" value="S-adenosyl-L-methionine-dependent methyltransferases"/>
    <property type="match status" value="1"/>
</dbReference>
<sequence>MIFKDYDFLQNYDLKNFEEKVKIYKELLSKFNRIHNLTHLKNIDENIFDSIKILDFYDFSKAKNIADIGSGAGFPAVFLAFLLQSNFHLFEPNPKKAAFLRTLKIECELPNLHIYKEKVQEYKNTFKADIITSRALMDVKPLLEICKNLKDENTVFILWKGSEIYQELENIKDYEIFENNLRRYCILK</sequence>
<accession>A1VZY5</accession>
<comment type="function">
    <text evidence="1">Specifically methylates the N7 position of guanine in position 527 of 16S rRNA.</text>
</comment>
<comment type="catalytic activity">
    <reaction evidence="1">
        <text>guanosine(527) in 16S rRNA + S-adenosyl-L-methionine = N(7)-methylguanosine(527) in 16S rRNA + S-adenosyl-L-homocysteine</text>
        <dbReference type="Rhea" id="RHEA:42732"/>
        <dbReference type="Rhea" id="RHEA-COMP:10209"/>
        <dbReference type="Rhea" id="RHEA-COMP:10210"/>
        <dbReference type="ChEBI" id="CHEBI:57856"/>
        <dbReference type="ChEBI" id="CHEBI:59789"/>
        <dbReference type="ChEBI" id="CHEBI:74269"/>
        <dbReference type="ChEBI" id="CHEBI:74480"/>
        <dbReference type="EC" id="2.1.1.170"/>
    </reaction>
</comment>
<comment type="subcellular location">
    <subcellularLocation>
        <location evidence="1">Cytoplasm</location>
    </subcellularLocation>
</comment>
<comment type="similarity">
    <text evidence="1">Belongs to the methyltransferase superfamily. RNA methyltransferase RsmG family.</text>
</comment>
<name>RSMG_CAMJJ</name>
<keyword id="KW-0963">Cytoplasm</keyword>
<keyword id="KW-0489">Methyltransferase</keyword>
<keyword id="KW-0698">rRNA processing</keyword>
<keyword id="KW-0949">S-adenosyl-L-methionine</keyword>
<keyword id="KW-0808">Transferase</keyword>
<gene>
    <name evidence="1" type="primary">rsmG</name>
    <name type="ordered locus">CJJ81176_1015</name>
</gene>
<evidence type="ECO:0000255" key="1">
    <source>
        <dbReference type="HAMAP-Rule" id="MF_00074"/>
    </source>
</evidence>
<feature type="chain" id="PRO_1000010130" description="Ribosomal RNA small subunit methyltransferase G">
    <location>
        <begin position="1"/>
        <end position="188"/>
    </location>
</feature>
<feature type="binding site" evidence="1">
    <location>
        <position position="69"/>
    </location>
    <ligand>
        <name>S-adenosyl-L-methionine</name>
        <dbReference type="ChEBI" id="CHEBI:59789"/>
    </ligand>
</feature>
<feature type="binding site" evidence="1">
    <location>
        <position position="74"/>
    </location>
    <ligand>
        <name>S-adenosyl-L-methionine</name>
        <dbReference type="ChEBI" id="CHEBI:59789"/>
    </ligand>
</feature>
<feature type="binding site" evidence="1">
    <location>
        <begin position="119"/>
        <end position="120"/>
    </location>
    <ligand>
        <name>S-adenosyl-L-methionine</name>
        <dbReference type="ChEBI" id="CHEBI:59789"/>
    </ligand>
</feature>
<feature type="binding site" evidence="1">
    <location>
        <position position="134"/>
    </location>
    <ligand>
        <name>S-adenosyl-L-methionine</name>
        <dbReference type="ChEBI" id="CHEBI:59789"/>
    </ligand>
</feature>
<organism>
    <name type="scientific">Campylobacter jejuni subsp. jejuni serotype O:23/36 (strain 81-176)</name>
    <dbReference type="NCBI Taxonomy" id="354242"/>
    <lineage>
        <taxon>Bacteria</taxon>
        <taxon>Pseudomonadati</taxon>
        <taxon>Campylobacterota</taxon>
        <taxon>Epsilonproteobacteria</taxon>
        <taxon>Campylobacterales</taxon>
        <taxon>Campylobacteraceae</taxon>
        <taxon>Campylobacter</taxon>
    </lineage>
</organism>
<proteinExistence type="inferred from homology"/>